<evidence type="ECO:0000255" key="1">
    <source>
        <dbReference type="HAMAP-Rule" id="MF_00033"/>
    </source>
</evidence>
<gene>
    <name evidence="1" type="primary">murG</name>
    <name type="ordered locus">Bcer98_2560</name>
</gene>
<organism>
    <name type="scientific">Bacillus cytotoxicus (strain DSM 22905 / CIP 110041 / 391-98 / NVH 391-98)</name>
    <dbReference type="NCBI Taxonomy" id="315749"/>
    <lineage>
        <taxon>Bacteria</taxon>
        <taxon>Bacillati</taxon>
        <taxon>Bacillota</taxon>
        <taxon>Bacilli</taxon>
        <taxon>Bacillales</taxon>
        <taxon>Bacillaceae</taxon>
        <taxon>Bacillus</taxon>
        <taxon>Bacillus cereus group</taxon>
    </lineage>
</organism>
<reference key="1">
    <citation type="journal article" date="2008" name="Chem. Biol. Interact.">
        <title>Extending the Bacillus cereus group genomics to putative food-borne pathogens of different toxicity.</title>
        <authorList>
            <person name="Lapidus A."/>
            <person name="Goltsman E."/>
            <person name="Auger S."/>
            <person name="Galleron N."/>
            <person name="Segurens B."/>
            <person name="Dossat C."/>
            <person name="Land M.L."/>
            <person name="Broussolle V."/>
            <person name="Brillard J."/>
            <person name="Guinebretiere M.-H."/>
            <person name="Sanchis V."/>
            <person name="Nguen-the C."/>
            <person name="Lereclus D."/>
            <person name="Richardson P."/>
            <person name="Wincker P."/>
            <person name="Weissenbach J."/>
            <person name="Ehrlich S.D."/>
            <person name="Sorokin A."/>
        </authorList>
    </citation>
    <scope>NUCLEOTIDE SEQUENCE [LARGE SCALE GENOMIC DNA]</scope>
    <source>
        <strain>DSM 22905 / CIP 110041 / 391-98 / NVH 391-98</strain>
    </source>
</reference>
<accession>A7GRN6</accession>
<proteinExistence type="inferred from homology"/>
<comment type="function">
    <text evidence="1">Cell wall formation. Catalyzes the transfer of a GlcNAc subunit on undecaprenyl-pyrophosphoryl-MurNAc-pentapeptide (lipid intermediate I) to form undecaprenyl-pyrophosphoryl-MurNAc-(pentapeptide)GlcNAc (lipid intermediate II).</text>
</comment>
<comment type="catalytic activity">
    <reaction evidence="1">
        <text>di-trans,octa-cis-undecaprenyl diphospho-N-acetyl-alpha-D-muramoyl-L-alanyl-D-glutamyl-meso-2,6-diaminopimeloyl-D-alanyl-D-alanine + UDP-N-acetyl-alpha-D-glucosamine = di-trans,octa-cis-undecaprenyl diphospho-[N-acetyl-alpha-D-glucosaminyl-(1-&gt;4)]-N-acetyl-alpha-D-muramoyl-L-alanyl-D-glutamyl-meso-2,6-diaminopimeloyl-D-alanyl-D-alanine + UDP + H(+)</text>
        <dbReference type="Rhea" id="RHEA:31227"/>
        <dbReference type="ChEBI" id="CHEBI:15378"/>
        <dbReference type="ChEBI" id="CHEBI:57705"/>
        <dbReference type="ChEBI" id="CHEBI:58223"/>
        <dbReference type="ChEBI" id="CHEBI:61387"/>
        <dbReference type="ChEBI" id="CHEBI:61388"/>
        <dbReference type="EC" id="2.4.1.227"/>
    </reaction>
</comment>
<comment type="pathway">
    <text evidence="1">Cell wall biogenesis; peptidoglycan biosynthesis.</text>
</comment>
<comment type="subcellular location">
    <subcellularLocation>
        <location evidence="1">Cell membrane</location>
        <topology evidence="1">Peripheral membrane protein</topology>
        <orientation evidence="1">Cytoplasmic side</orientation>
    </subcellularLocation>
</comment>
<comment type="similarity">
    <text evidence="1">Belongs to the glycosyltransferase 28 family. MurG subfamily.</text>
</comment>
<keyword id="KW-0131">Cell cycle</keyword>
<keyword id="KW-0132">Cell division</keyword>
<keyword id="KW-1003">Cell membrane</keyword>
<keyword id="KW-0133">Cell shape</keyword>
<keyword id="KW-0961">Cell wall biogenesis/degradation</keyword>
<keyword id="KW-0328">Glycosyltransferase</keyword>
<keyword id="KW-0472">Membrane</keyword>
<keyword id="KW-0573">Peptidoglycan synthesis</keyword>
<keyword id="KW-0808">Transferase</keyword>
<dbReference type="EC" id="2.4.1.227" evidence="1"/>
<dbReference type="EMBL" id="CP000764">
    <property type="protein sequence ID" value="ABS22794.1"/>
    <property type="molecule type" value="Genomic_DNA"/>
</dbReference>
<dbReference type="RefSeq" id="WP_012095001.1">
    <property type="nucleotide sequence ID" value="NC_009674.1"/>
</dbReference>
<dbReference type="SMR" id="A7GRN6"/>
<dbReference type="STRING" id="315749.Bcer98_2560"/>
<dbReference type="CAZy" id="GT28">
    <property type="family name" value="Glycosyltransferase Family 28"/>
</dbReference>
<dbReference type="GeneID" id="33897813"/>
<dbReference type="KEGG" id="bcy:Bcer98_2560"/>
<dbReference type="eggNOG" id="COG0707">
    <property type="taxonomic scope" value="Bacteria"/>
</dbReference>
<dbReference type="HOGENOM" id="CLU_037404_0_1_9"/>
<dbReference type="OrthoDB" id="9808936at2"/>
<dbReference type="UniPathway" id="UPA00219"/>
<dbReference type="Proteomes" id="UP000002300">
    <property type="component" value="Chromosome"/>
</dbReference>
<dbReference type="GO" id="GO:0005886">
    <property type="term" value="C:plasma membrane"/>
    <property type="evidence" value="ECO:0007669"/>
    <property type="project" value="UniProtKB-SubCell"/>
</dbReference>
<dbReference type="GO" id="GO:0051991">
    <property type="term" value="F:UDP-N-acetyl-D-glucosamine:N-acetylmuramoyl-L-alanyl-D-glutamyl-meso-2,6-diaminopimelyl-D-alanyl-D-alanine-diphosphoundecaprenol 4-beta-N-acetylglucosaminlytransferase activity"/>
    <property type="evidence" value="ECO:0007669"/>
    <property type="project" value="RHEA"/>
</dbReference>
<dbReference type="GO" id="GO:0050511">
    <property type="term" value="F:undecaprenyldiphospho-muramoylpentapeptide beta-N-acetylglucosaminyltransferase activity"/>
    <property type="evidence" value="ECO:0007669"/>
    <property type="project" value="UniProtKB-UniRule"/>
</dbReference>
<dbReference type="GO" id="GO:0005975">
    <property type="term" value="P:carbohydrate metabolic process"/>
    <property type="evidence" value="ECO:0007669"/>
    <property type="project" value="InterPro"/>
</dbReference>
<dbReference type="GO" id="GO:0051301">
    <property type="term" value="P:cell division"/>
    <property type="evidence" value="ECO:0007669"/>
    <property type="project" value="UniProtKB-KW"/>
</dbReference>
<dbReference type="GO" id="GO:0071555">
    <property type="term" value="P:cell wall organization"/>
    <property type="evidence" value="ECO:0007669"/>
    <property type="project" value="UniProtKB-KW"/>
</dbReference>
<dbReference type="GO" id="GO:0030259">
    <property type="term" value="P:lipid glycosylation"/>
    <property type="evidence" value="ECO:0007669"/>
    <property type="project" value="UniProtKB-UniRule"/>
</dbReference>
<dbReference type="GO" id="GO:0009252">
    <property type="term" value="P:peptidoglycan biosynthetic process"/>
    <property type="evidence" value="ECO:0007669"/>
    <property type="project" value="UniProtKB-UniRule"/>
</dbReference>
<dbReference type="GO" id="GO:0008360">
    <property type="term" value="P:regulation of cell shape"/>
    <property type="evidence" value="ECO:0007669"/>
    <property type="project" value="UniProtKB-KW"/>
</dbReference>
<dbReference type="CDD" id="cd03785">
    <property type="entry name" value="GT28_MurG"/>
    <property type="match status" value="1"/>
</dbReference>
<dbReference type="Gene3D" id="3.40.50.2000">
    <property type="entry name" value="Glycogen Phosphorylase B"/>
    <property type="match status" value="2"/>
</dbReference>
<dbReference type="HAMAP" id="MF_00033">
    <property type="entry name" value="MurG"/>
    <property type="match status" value="1"/>
</dbReference>
<dbReference type="InterPro" id="IPR006009">
    <property type="entry name" value="GlcNAc_MurG"/>
</dbReference>
<dbReference type="InterPro" id="IPR007235">
    <property type="entry name" value="Glyco_trans_28_C"/>
</dbReference>
<dbReference type="InterPro" id="IPR004276">
    <property type="entry name" value="GlycoTrans_28_N"/>
</dbReference>
<dbReference type="NCBIfam" id="TIGR01133">
    <property type="entry name" value="murG"/>
    <property type="match status" value="1"/>
</dbReference>
<dbReference type="PANTHER" id="PTHR21015:SF22">
    <property type="entry name" value="GLYCOSYLTRANSFERASE"/>
    <property type="match status" value="1"/>
</dbReference>
<dbReference type="PANTHER" id="PTHR21015">
    <property type="entry name" value="UDP-N-ACETYLGLUCOSAMINE--N-ACETYLMURAMYL-(PENTAPEPTIDE) PYROPHOSPHORYL-UNDECAPRENOL N-ACETYLGLUCOSAMINE TRANSFERASE 1"/>
    <property type="match status" value="1"/>
</dbReference>
<dbReference type="Pfam" id="PF04101">
    <property type="entry name" value="Glyco_tran_28_C"/>
    <property type="match status" value="1"/>
</dbReference>
<dbReference type="Pfam" id="PF03033">
    <property type="entry name" value="Glyco_transf_28"/>
    <property type="match status" value="1"/>
</dbReference>
<dbReference type="SUPFAM" id="SSF53756">
    <property type="entry name" value="UDP-Glycosyltransferase/glycogen phosphorylase"/>
    <property type="match status" value="1"/>
</dbReference>
<sequence length="364" mass="39860">MRILVSGGGTGGHIYPALALIREIKKLHPEARFLYIGTENGLESTIVPKAGIPFQSIVISGFKRKISFDNVKTVMRFVKGVQDSKRYIRRFNPDVVIGTGGYVCGPVVYAAAKLGIPTIVHEQNSVPGVTNKFLSRYVDKVAVCFEAAAEHFPQSKVVMTGNPRASEVMNQNGMKGKRSVGLSLSKKSVLIFGGSRGARPINDAFVEAIEQFGNKNYEVLYITGEVHYDKVMEIVREKGNPDNVMIKPFIHNMPEVLTGVDLVVSRAGATTLAELTALGKPSILIPSPYVTNNHQEKNAKSIVDKGAAKMLLEKDLTAETLLHNIDEILLNTQTLQNMKLAAKQLGIPDAANKLFEVMKQLMKK</sequence>
<protein>
    <recommendedName>
        <fullName evidence="1">UDP-N-acetylglucosamine--N-acetylmuramyl-(pentapeptide) pyrophosphoryl-undecaprenol N-acetylglucosamine transferase</fullName>
        <ecNumber evidence="1">2.4.1.227</ecNumber>
    </recommendedName>
    <alternativeName>
        <fullName evidence="1">Undecaprenyl-PP-MurNAc-pentapeptide-UDPGlcNAc GlcNAc transferase</fullName>
    </alternativeName>
</protein>
<name>MURG_BACCN</name>
<feature type="chain" id="PRO_1000074446" description="UDP-N-acetylglucosamine--N-acetylmuramyl-(pentapeptide) pyrophosphoryl-undecaprenol N-acetylglucosamine transferase">
    <location>
        <begin position="1"/>
        <end position="364"/>
    </location>
</feature>
<feature type="binding site" evidence="1">
    <location>
        <begin position="10"/>
        <end position="12"/>
    </location>
    <ligand>
        <name>UDP-N-acetyl-alpha-D-glucosamine</name>
        <dbReference type="ChEBI" id="CHEBI:57705"/>
    </ligand>
</feature>
<feature type="binding site" evidence="1">
    <location>
        <position position="124"/>
    </location>
    <ligand>
        <name>UDP-N-acetyl-alpha-D-glucosamine</name>
        <dbReference type="ChEBI" id="CHEBI:57705"/>
    </ligand>
</feature>
<feature type="binding site" evidence="1">
    <location>
        <position position="195"/>
    </location>
    <ligand>
        <name>UDP-N-acetyl-alpha-D-glucosamine</name>
        <dbReference type="ChEBI" id="CHEBI:57705"/>
    </ligand>
</feature>
<feature type="binding site" evidence="1">
    <location>
        <position position="250"/>
    </location>
    <ligand>
        <name>UDP-N-acetyl-alpha-D-glucosamine</name>
        <dbReference type="ChEBI" id="CHEBI:57705"/>
    </ligand>
</feature>
<feature type="binding site" evidence="1">
    <location>
        <position position="295"/>
    </location>
    <ligand>
        <name>UDP-N-acetyl-alpha-D-glucosamine</name>
        <dbReference type="ChEBI" id="CHEBI:57705"/>
    </ligand>
</feature>